<dbReference type="EC" id="3.6.1.-" evidence="1"/>
<dbReference type="EMBL" id="CP000323">
    <property type="protein sequence ID" value="ABE76087.1"/>
    <property type="molecule type" value="Genomic_DNA"/>
</dbReference>
<dbReference type="RefSeq" id="WP_011514617.1">
    <property type="nucleotide sequence ID" value="NC_007969.1"/>
</dbReference>
<dbReference type="SMR" id="Q1Q8B6"/>
<dbReference type="STRING" id="335284.Pcryo_2310"/>
<dbReference type="KEGG" id="pcr:Pcryo_2310"/>
<dbReference type="eggNOG" id="COG0494">
    <property type="taxonomic scope" value="Bacteria"/>
</dbReference>
<dbReference type="HOGENOM" id="CLU_087195_3_1_6"/>
<dbReference type="Proteomes" id="UP000002425">
    <property type="component" value="Chromosome"/>
</dbReference>
<dbReference type="GO" id="GO:0016462">
    <property type="term" value="F:pyrophosphatase activity"/>
    <property type="evidence" value="ECO:0007669"/>
    <property type="project" value="UniProtKB-ARBA"/>
</dbReference>
<dbReference type="CDD" id="cd03671">
    <property type="entry name" value="NUDIX_Ap4A_hydrolase_plant_like"/>
    <property type="match status" value="1"/>
</dbReference>
<dbReference type="FunFam" id="3.90.79.10:FF:000001">
    <property type="entry name" value="RNA pyrophosphohydrolase"/>
    <property type="match status" value="1"/>
</dbReference>
<dbReference type="Gene3D" id="3.90.79.10">
    <property type="entry name" value="Nucleoside Triphosphate Pyrophosphohydrolase"/>
    <property type="match status" value="1"/>
</dbReference>
<dbReference type="HAMAP" id="MF_00298">
    <property type="entry name" value="Nudix_RppH"/>
    <property type="match status" value="1"/>
</dbReference>
<dbReference type="InterPro" id="IPR020476">
    <property type="entry name" value="Nudix_hydrolase"/>
</dbReference>
<dbReference type="InterPro" id="IPR015797">
    <property type="entry name" value="NUDIX_hydrolase-like_dom_sf"/>
</dbReference>
<dbReference type="InterPro" id="IPR020084">
    <property type="entry name" value="NUDIX_hydrolase_CS"/>
</dbReference>
<dbReference type="InterPro" id="IPR000086">
    <property type="entry name" value="NUDIX_hydrolase_dom"/>
</dbReference>
<dbReference type="InterPro" id="IPR022927">
    <property type="entry name" value="RppH"/>
</dbReference>
<dbReference type="NCBIfam" id="NF001934">
    <property type="entry name" value="PRK00714.1-1"/>
    <property type="match status" value="1"/>
</dbReference>
<dbReference type="NCBIfam" id="NF001937">
    <property type="entry name" value="PRK00714.1-4"/>
    <property type="match status" value="1"/>
</dbReference>
<dbReference type="NCBIfam" id="NF001938">
    <property type="entry name" value="PRK00714.1-5"/>
    <property type="match status" value="1"/>
</dbReference>
<dbReference type="PANTHER" id="PTHR43736">
    <property type="entry name" value="ADP-RIBOSE PYROPHOSPHATASE"/>
    <property type="match status" value="1"/>
</dbReference>
<dbReference type="PANTHER" id="PTHR43736:SF1">
    <property type="entry name" value="DIHYDRONEOPTERIN TRIPHOSPHATE DIPHOSPHATASE"/>
    <property type="match status" value="1"/>
</dbReference>
<dbReference type="Pfam" id="PF00293">
    <property type="entry name" value="NUDIX"/>
    <property type="match status" value="1"/>
</dbReference>
<dbReference type="PRINTS" id="PR00502">
    <property type="entry name" value="NUDIXFAMILY"/>
</dbReference>
<dbReference type="SUPFAM" id="SSF55811">
    <property type="entry name" value="Nudix"/>
    <property type="match status" value="1"/>
</dbReference>
<dbReference type="PROSITE" id="PS51462">
    <property type="entry name" value="NUDIX"/>
    <property type="match status" value="1"/>
</dbReference>
<dbReference type="PROSITE" id="PS00893">
    <property type="entry name" value="NUDIX_BOX"/>
    <property type="match status" value="1"/>
</dbReference>
<keyword id="KW-0378">Hydrolase</keyword>
<accession>Q1Q8B6</accession>
<evidence type="ECO:0000255" key="1">
    <source>
        <dbReference type="HAMAP-Rule" id="MF_00298"/>
    </source>
</evidence>
<organism>
    <name type="scientific">Psychrobacter cryohalolentis (strain ATCC BAA-1226 / DSM 17306 / VKM B-2378 / K5)</name>
    <dbReference type="NCBI Taxonomy" id="335284"/>
    <lineage>
        <taxon>Bacteria</taxon>
        <taxon>Pseudomonadati</taxon>
        <taxon>Pseudomonadota</taxon>
        <taxon>Gammaproteobacteria</taxon>
        <taxon>Moraxellales</taxon>
        <taxon>Moraxellaceae</taxon>
        <taxon>Psychrobacter</taxon>
    </lineage>
</organism>
<protein>
    <recommendedName>
        <fullName evidence="1">RNA pyrophosphohydrolase</fullName>
        <ecNumber evidence="1">3.6.1.-</ecNumber>
    </recommendedName>
    <alternativeName>
        <fullName evidence="1">(Di)nucleoside polyphosphate hydrolase</fullName>
    </alternativeName>
</protein>
<proteinExistence type="inferred from homology"/>
<feature type="chain" id="PRO_1000021976" description="RNA pyrophosphohydrolase">
    <location>
        <begin position="1"/>
        <end position="173"/>
    </location>
</feature>
<feature type="domain" description="Nudix hydrolase" evidence="1">
    <location>
        <begin position="6"/>
        <end position="149"/>
    </location>
</feature>
<feature type="short sequence motif" description="Nudix box">
    <location>
        <begin position="38"/>
        <end position="59"/>
    </location>
</feature>
<reference key="1">
    <citation type="submission" date="2006-03" db="EMBL/GenBank/DDBJ databases">
        <title>Complete sequence of chromosome of Psychrobacter cryohalolentis K5.</title>
        <authorList>
            <consortium name="US DOE Joint Genome Institute"/>
            <person name="Copeland A."/>
            <person name="Lucas S."/>
            <person name="Lapidus A."/>
            <person name="Barry K."/>
            <person name="Detter J.C."/>
            <person name="Glavina T."/>
            <person name="Hammon N."/>
            <person name="Israni S."/>
            <person name="Dalin E."/>
            <person name="Tice H."/>
            <person name="Pitluck S."/>
            <person name="Brettin T."/>
            <person name="Bruce D."/>
            <person name="Han C."/>
            <person name="Tapia R."/>
            <person name="Sims D.R."/>
            <person name="Gilna P."/>
            <person name="Schmutz J."/>
            <person name="Larimer F."/>
            <person name="Land M."/>
            <person name="Hauser L."/>
            <person name="Kyrpides N."/>
            <person name="Kim E."/>
            <person name="Richardson P."/>
        </authorList>
    </citation>
    <scope>NUCLEOTIDE SEQUENCE [LARGE SCALE GENOMIC DNA]</scope>
    <source>
        <strain>ATCC BAA-1226 / DSM 17306 / VKM B-2378 / K5</strain>
    </source>
</reference>
<name>RPPH_PSYCK</name>
<sequence length="173" mass="20565">MIDADGFRANVGIILANTQGQVLWAKRIGHNAWQFPQGGIDRGETPMDAMYRELWEEVGLHPRHVDLLAVTQDWLRYRLPKRYVRHGQYPLCIGQKQKWFLLRLDEPNTQHIRFDEGKPEFDNWQWVSYWYPLGQVIHFKRSVYRRALQELVPELPLQQGLIIPEQNNHLLVE</sequence>
<comment type="function">
    <text evidence="1">Accelerates the degradation of transcripts by removing pyrophosphate from the 5'-end of triphosphorylated RNA, leading to a more labile monophosphorylated state that can stimulate subsequent ribonuclease cleavage.</text>
</comment>
<comment type="cofactor">
    <cofactor evidence="1">
        <name>a divalent metal cation</name>
        <dbReference type="ChEBI" id="CHEBI:60240"/>
    </cofactor>
</comment>
<comment type="similarity">
    <text evidence="1">Belongs to the Nudix hydrolase family. RppH subfamily.</text>
</comment>
<gene>
    <name evidence="1" type="primary">rppH</name>
    <name evidence="1" type="synonym">nudH</name>
    <name type="ordered locus">Pcryo_2310</name>
</gene>